<gene>
    <name type="primary">mutB</name>
    <name type="ordered locus">MT1540</name>
</gene>
<evidence type="ECO:0000250" key="1"/>
<evidence type="ECO:0000250" key="2">
    <source>
        <dbReference type="UniProtKB" id="P11653"/>
    </source>
</evidence>
<evidence type="ECO:0000255" key="3">
    <source>
        <dbReference type="PROSITE-ProRule" id="PRU00666"/>
    </source>
</evidence>
<evidence type="ECO:0000305" key="4"/>
<keyword id="KW-0846">Cobalamin</keyword>
<keyword id="KW-0170">Cobalt</keyword>
<keyword id="KW-0413">Isomerase</keyword>
<keyword id="KW-0479">Metal-binding</keyword>
<keyword id="KW-1185">Reference proteome</keyword>
<name>MUTB_MYCTO</name>
<comment type="function">
    <text evidence="1">Catalyzes the isomerization of succinyl-CoA to methylmalonyl-CoA during synthesis of propionate from tricarboxylic acid-cycle intermediates.</text>
</comment>
<comment type="catalytic activity">
    <reaction>
        <text>(R)-methylmalonyl-CoA = succinyl-CoA</text>
        <dbReference type="Rhea" id="RHEA:22888"/>
        <dbReference type="ChEBI" id="CHEBI:57292"/>
        <dbReference type="ChEBI" id="CHEBI:57326"/>
        <dbReference type="EC" id="5.4.99.2"/>
    </reaction>
</comment>
<comment type="cofactor">
    <cofactor evidence="1">
        <name>adenosylcob(III)alamin</name>
        <dbReference type="ChEBI" id="CHEBI:18408"/>
    </cofactor>
</comment>
<comment type="subunit">
    <text evidence="1">Heterodimer of an alpha and a beta chain.</text>
</comment>
<comment type="similarity">
    <text evidence="4">Belongs to the methylmalonyl-CoA mutase family.</text>
</comment>
<protein>
    <recommendedName>
        <fullName>Probable methylmalonyl-CoA mutase large subunit</fullName>
        <shortName>MCM</shortName>
        <ecNumber>5.4.99.2</ecNumber>
    </recommendedName>
</protein>
<dbReference type="EC" id="5.4.99.2"/>
<dbReference type="EMBL" id="AE000516">
    <property type="protein sequence ID" value="AAK45807.1"/>
    <property type="molecule type" value="Genomic_DNA"/>
</dbReference>
<dbReference type="PIR" id="H70711">
    <property type="entry name" value="H70711"/>
</dbReference>
<dbReference type="SMR" id="P9WJK4"/>
<dbReference type="KEGG" id="mtc:MT1540"/>
<dbReference type="PATRIC" id="fig|83331.31.peg.1657"/>
<dbReference type="HOGENOM" id="CLU_009523_3_1_11"/>
<dbReference type="Proteomes" id="UP000001020">
    <property type="component" value="Chromosome"/>
</dbReference>
<dbReference type="GO" id="GO:0005737">
    <property type="term" value="C:cytoplasm"/>
    <property type="evidence" value="ECO:0007669"/>
    <property type="project" value="TreeGrafter"/>
</dbReference>
<dbReference type="GO" id="GO:0031419">
    <property type="term" value="F:cobalamin binding"/>
    <property type="evidence" value="ECO:0007669"/>
    <property type="project" value="UniProtKB-KW"/>
</dbReference>
<dbReference type="GO" id="GO:0046872">
    <property type="term" value="F:metal ion binding"/>
    <property type="evidence" value="ECO:0007669"/>
    <property type="project" value="UniProtKB-KW"/>
</dbReference>
<dbReference type="GO" id="GO:0004494">
    <property type="term" value="F:methylmalonyl-CoA mutase activity"/>
    <property type="evidence" value="ECO:0007669"/>
    <property type="project" value="UniProtKB-EC"/>
</dbReference>
<dbReference type="GO" id="GO:0019678">
    <property type="term" value="P:propionate metabolic process, methylmalonyl pathway"/>
    <property type="evidence" value="ECO:0007669"/>
    <property type="project" value="TreeGrafter"/>
</dbReference>
<dbReference type="CDD" id="cd02071">
    <property type="entry name" value="MM_CoA_mut_B12_BD"/>
    <property type="match status" value="1"/>
</dbReference>
<dbReference type="CDD" id="cd03679">
    <property type="entry name" value="MM_CoA_mutase_alpha_like"/>
    <property type="match status" value="1"/>
</dbReference>
<dbReference type="FunFam" id="3.40.50.280:FF:000002">
    <property type="entry name" value="Methylmalonyl-CoA mutase, mitochondrial"/>
    <property type="match status" value="1"/>
</dbReference>
<dbReference type="FunFam" id="3.20.20.240:FF:000001">
    <property type="entry name" value="Probable methylmalonyl-coa mutase"/>
    <property type="match status" value="1"/>
</dbReference>
<dbReference type="Gene3D" id="3.40.50.280">
    <property type="entry name" value="Cobalamin-binding domain"/>
    <property type="match status" value="1"/>
</dbReference>
<dbReference type="Gene3D" id="3.20.20.240">
    <property type="entry name" value="Methylmalonyl-CoA mutase"/>
    <property type="match status" value="1"/>
</dbReference>
<dbReference type="InterPro" id="IPR006159">
    <property type="entry name" value="Acid_CoA_mut_C"/>
</dbReference>
<dbReference type="InterPro" id="IPR016176">
    <property type="entry name" value="Cbl-dep_enz_cat"/>
</dbReference>
<dbReference type="InterPro" id="IPR006158">
    <property type="entry name" value="Cobalamin-bd"/>
</dbReference>
<dbReference type="InterPro" id="IPR036724">
    <property type="entry name" value="Cobalamin-bd_sf"/>
</dbReference>
<dbReference type="InterPro" id="IPR006099">
    <property type="entry name" value="MeMalonylCoA_mutase_a/b_cat"/>
</dbReference>
<dbReference type="InterPro" id="IPR006098">
    <property type="entry name" value="MMCoA_mutase_a_cat"/>
</dbReference>
<dbReference type="NCBIfam" id="TIGR00640">
    <property type="entry name" value="acid_CoA_mut_C"/>
    <property type="match status" value="1"/>
</dbReference>
<dbReference type="NCBIfam" id="TIGR00641">
    <property type="entry name" value="acid_CoA_mut_N"/>
    <property type="match status" value="1"/>
</dbReference>
<dbReference type="NCBIfam" id="NF006944">
    <property type="entry name" value="PRK09426.1"/>
    <property type="match status" value="1"/>
</dbReference>
<dbReference type="PANTHER" id="PTHR48101:SF4">
    <property type="entry name" value="METHYLMALONYL-COA MUTASE, MITOCHONDRIAL"/>
    <property type="match status" value="1"/>
</dbReference>
<dbReference type="PANTHER" id="PTHR48101">
    <property type="entry name" value="METHYLMALONYL-COA MUTASE, MITOCHONDRIAL-RELATED"/>
    <property type="match status" value="1"/>
</dbReference>
<dbReference type="Pfam" id="PF02310">
    <property type="entry name" value="B12-binding"/>
    <property type="match status" value="1"/>
</dbReference>
<dbReference type="Pfam" id="PF01642">
    <property type="entry name" value="MM_CoA_mutase"/>
    <property type="match status" value="1"/>
</dbReference>
<dbReference type="SUPFAM" id="SSF52242">
    <property type="entry name" value="Cobalamin (vitamin B12)-binding domain"/>
    <property type="match status" value="1"/>
</dbReference>
<dbReference type="SUPFAM" id="SSF51703">
    <property type="entry name" value="Cobalamin (vitamin B12)-dependent enzymes"/>
    <property type="match status" value="1"/>
</dbReference>
<dbReference type="PROSITE" id="PS51332">
    <property type="entry name" value="B12_BINDING"/>
    <property type="match status" value="1"/>
</dbReference>
<dbReference type="PROSITE" id="PS00544">
    <property type="entry name" value="METMALONYL_COA_MUTASE"/>
    <property type="match status" value="1"/>
</dbReference>
<accession>P9WJK4</accession>
<accession>L0T9K4</accession>
<accession>P65487</accession>
<accession>P71774</accession>
<feature type="chain" id="PRO_0000427814" description="Probable methylmalonyl-CoA mutase large subunit">
    <location>
        <begin position="1"/>
        <end position="750"/>
    </location>
</feature>
<feature type="domain" description="B12-binding" evidence="3">
    <location>
        <begin position="616"/>
        <end position="748"/>
    </location>
</feature>
<feature type="binding site" evidence="2">
    <location>
        <position position="91"/>
    </location>
    <ligand>
        <name>(R)-methylmalonyl-CoA</name>
        <dbReference type="ChEBI" id="CHEBI:57326"/>
    </ligand>
</feature>
<feature type="binding site" evidence="2">
    <location>
        <position position="94"/>
    </location>
    <ligand>
        <name>(R)-methylmalonyl-CoA</name>
        <dbReference type="ChEBI" id="CHEBI:57326"/>
    </ligand>
</feature>
<feature type="binding site" evidence="2">
    <location>
        <position position="101"/>
    </location>
    <ligand>
        <name>(R)-methylmalonyl-CoA</name>
        <dbReference type="ChEBI" id="CHEBI:57326"/>
    </ligand>
</feature>
<feature type="binding site" evidence="2">
    <location>
        <position position="103"/>
    </location>
    <ligand>
        <name>(R)-methylmalonyl-CoA</name>
        <dbReference type="ChEBI" id="CHEBI:57326"/>
    </ligand>
</feature>
<feature type="binding site" evidence="2">
    <location>
        <position position="105"/>
    </location>
    <ligand>
        <name>(R)-methylmalonyl-CoA</name>
        <dbReference type="ChEBI" id="CHEBI:57326"/>
    </ligand>
</feature>
<feature type="binding site" evidence="2">
    <location>
        <position position="130"/>
    </location>
    <ligand>
        <name>(R)-methylmalonyl-CoA</name>
        <dbReference type="ChEBI" id="CHEBI:57326"/>
    </ligand>
</feature>
<feature type="binding site" evidence="2">
    <location>
        <position position="133"/>
    </location>
    <ligand>
        <name>cob(II)alamin</name>
        <dbReference type="ChEBI" id="CHEBI:16304"/>
    </ligand>
</feature>
<feature type="binding site" evidence="2">
    <location>
        <position position="155"/>
    </location>
    <ligand>
        <name>cob(II)alamin</name>
        <dbReference type="ChEBI" id="CHEBI:16304"/>
    </ligand>
</feature>
<feature type="binding site" evidence="2">
    <location>
        <position position="211"/>
    </location>
    <ligand>
        <name>(R)-methylmalonyl-CoA</name>
        <dbReference type="ChEBI" id="CHEBI:57326"/>
    </ligand>
</feature>
<feature type="binding site" evidence="2">
    <location>
        <position position="213"/>
    </location>
    <ligand>
        <name>(R)-methylmalonyl-CoA</name>
        <dbReference type="ChEBI" id="CHEBI:57326"/>
    </ligand>
</feature>
<feature type="binding site" evidence="2">
    <location>
        <position position="222"/>
    </location>
    <ligand>
        <name>cob(II)alamin</name>
        <dbReference type="ChEBI" id="CHEBI:16304"/>
    </ligand>
</feature>
<feature type="binding site" evidence="2">
    <location>
        <position position="223"/>
    </location>
    <ligand>
        <name>(R)-methylmalonyl-CoA</name>
        <dbReference type="ChEBI" id="CHEBI:57326"/>
    </ligand>
</feature>
<feature type="binding site" evidence="2">
    <location>
        <position position="223"/>
    </location>
    <ligand>
        <name>cob(II)alamin</name>
        <dbReference type="ChEBI" id="CHEBI:16304"/>
    </ligand>
</feature>
<feature type="binding site" evidence="2">
    <location>
        <position position="260"/>
    </location>
    <ligand>
        <name>(R)-methylmalonyl-CoA</name>
        <dbReference type="ChEBI" id="CHEBI:57326"/>
    </ligand>
</feature>
<feature type="binding site" evidence="2">
    <location>
        <position position="299"/>
    </location>
    <ligand>
        <name>(R)-methylmalonyl-CoA</name>
        <dbReference type="ChEBI" id="CHEBI:57326"/>
    </ligand>
</feature>
<feature type="binding site" evidence="2">
    <location>
        <position position="301"/>
    </location>
    <ligand>
        <name>(R)-methylmalonyl-CoA</name>
        <dbReference type="ChEBI" id="CHEBI:57326"/>
    </ligand>
</feature>
<feature type="binding site" evidence="2">
    <location>
        <position position="349"/>
    </location>
    <ligand>
        <name>cob(II)alamin</name>
        <dbReference type="ChEBI" id="CHEBI:16304"/>
    </ligand>
</feature>
<feature type="binding site" evidence="2">
    <location>
        <position position="386"/>
    </location>
    <ligand>
        <name>cob(II)alamin</name>
        <dbReference type="ChEBI" id="CHEBI:16304"/>
    </ligand>
</feature>
<feature type="binding site" evidence="2">
    <location>
        <position position="389"/>
    </location>
    <ligand>
        <name>cob(II)alamin</name>
        <dbReference type="ChEBI" id="CHEBI:16304"/>
    </ligand>
</feature>
<feature type="binding site" evidence="2">
    <location>
        <position position="628"/>
    </location>
    <ligand>
        <name>cob(II)alamin</name>
        <dbReference type="ChEBI" id="CHEBI:16304"/>
    </ligand>
</feature>
<feature type="binding site" description="axial binding residue" evidence="2">
    <location>
        <position position="629"/>
    </location>
    <ligand>
        <name>cob(II)alamin</name>
        <dbReference type="ChEBI" id="CHEBI:16304"/>
    </ligand>
    <ligandPart>
        <name>Co</name>
        <dbReference type="ChEBI" id="CHEBI:27638"/>
    </ligandPart>
</feature>
<feature type="binding site" evidence="2">
    <location>
        <position position="630"/>
    </location>
    <ligand>
        <name>cob(II)alamin</name>
        <dbReference type="ChEBI" id="CHEBI:16304"/>
    </ligand>
</feature>
<feature type="binding site" evidence="2">
    <location>
        <position position="631"/>
    </location>
    <ligand>
        <name>cob(II)alamin</name>
        <dbReference type="ChEBI" id="CHEBI:16304"/>
    </ligand>
</feature>
<feature type="binding site" evidence="2">
    <location>
        <position position="674"/>
    </location>
    <ligand>
        <name>cob(II)alamin</name>
        <dbReference type="ChEBI" id="CHEBI:16304"/>
    </ligand>
</feature>
<feature type="binding site" evidence="2">
    <location>
        <position position="676"/>
    </location>
    <ligand>
        <name>cob(II)alamin</name>
        <dbReference type="ChEBI" id="CHEBI:16304"/>
    </ligand>
</feature>
<feature type="binding site" evidence="2">
    <location>
        <position position="705"/>
    </location>
    <ligand>
        <name>cob(II)alamin</name>
        <dbReference type="ChEBI" id="CHEBI:16304"/>
    </ligand>
</feature>
<feature type="binding site" evidence="2">
    <location>
        <position position="728"/>
    </location>
    <ligand>
        <name>cob(II)alamin</name>
        <dbReference type="ChEBI" id="CHEBI:16304"/>
    </ligand>
</feature>
<feature type="site" description="Transition state stabilizer" evidence="2">
    <location>
        <position position="105"/>
    </location>
</feature>
<sequence>MTTKTPVIGSFAGVPLHSERAAQSPTEAAVHTHVAAAAAAHGYTPEQLVWHTPEGIDVTPVYIAADRAAAEAEGYPLHSFPGEPPFVRGPYPTMYVNQPWTIRQYAGFSTAADSNAFYRRNLAAGQKGLSVAFDLATHRGYDSDHPRVQGDVGMAGVAIDSILDMRQLFDGIDLSTVSVSMTMNGAVLPILALYVVAAEEQGVAPEQLAGTIQNDILKEFMVRNTYIYPPKPSMRIISDIFAYTSAKMPKFNSISISGYHIQEAGATADLELAYTLADGVDYIRAGLNAGLDIDSFAPRLSFFWGIGMNFFMEVAKLRAGRLLWSELVAQFAPKSAKSLSLRTHSQTSGWSLTAQDVFNNVARTCIEAMAATQGHTQSLHTNALDEALALPTDFSARIARNTQLVLQQESGTTRPIDPWGGSYYVEWLTHRLARRARAHIAEVAEHGGMAQAISDGIPKLRIEEAAARTQARIDSGQQPVVGVNKYQVPEDHEIEVLKVENSRVRAEQLAKLQRLRAGRDEPAVRAALAELTRAAAEQGRAGADGLGNNLLALAIDAARAQATVGEISEALEKVYGRHRAEIRTISGVYRDEVGKAPNIAAATELVEKFAEADGRRPRILIAKMGQDGHDRGQKVIATAFADIGFDVDVGSLFSTPEEVARQAADNDVHVIGVSSLAAGHLTLVPALRDALAQVGRPDIMIVVGGVIPPGDFDELYAAGATAIFPPGTVIADAAIDLLHRLAERLGYTLD</sequence>
<organism>
    <name type="scientific">Mycobacterium tuberculosis (strain CDC 1551 / Oshkosh)</name>
    <dbReference type="NCBI Taxonomy" id="83331"/>
    <lineage>
        <taxon>Bacteria</taxon>
        <taxon>Bacillati</taxon>
        <taxon>Actinomycetota</taxon>
        <taxon>Actinomycetes</taxon>
        <taxon>Mycobacteriales</taxon>
        <taxon>Mycobacteriaceae</taxon>
        <taxon>Mycobacterium</taxon>
        <taxon>Mycobacterium tuberculosis complex</taxon>
    </lineage>
</organism>
<proteinExistence type="inferred from homology"/>
<reference key="1">
    <citation type="journal article" date="2002" name="J. Bacteriol.">
        <title>Whole-genome comparison of Mycobacterium tuberculosis clinical and laboratory strains.</title>
        <authorList>
            <person name="Fleischmann R.D."/>
            <person name="Alland D."/>
            <person name="Eisen J.A."/>
            <person name="Carpenter L."/>
            <person name="White O."/>
            <person name="Peterson J.D."/>
            <person name="DeBoy R.T."/>
            <person name="Dodson R.J."/>
            <person name="Gwinn M.L."/>
            <person name="Haft D.H."/>
            <person name="Hickey E.K."/>
            <person name="Kolonay J.F."/>
            <person name="Nelson W.C."/>
            <person name="Umayam L.A."/>
            <person name="Ermolaeva M.D."/>
            <person name="Salzberg S.L."/>
            <person name="Delcher A."/>
            <person name="Utterback T.R."/>
            <person name="Weidman J.F."/>
            <person name="Khouri H.M."/>
            <person name="Gill J."/>
            <person name="Mikula A."/>
            <person name="Bishai W."/>
            <person name="Jacobs W.R. Jr."/>
            <person name="Venter J.C."/>
            <person name="Fraser C.M."/>
        </authorList>
    </citation>
    <scope>NUCLEOTIDE SEQUENCE [LARGE SCALE GENOMIC DNA]</scope>
    <source>
        <strain>CDC 1551 / Oshkosh</strain>
    </source>
</reference>